<comment type="function">
    <text evidence="1">Necessary for efficient RNA polymerase transcription elongation past template-encoded arresting sites. The arresting sites in DNA have the property of trapping a certain fraction of elongating RNA polymerases that pass through, resulting in locked ternary complexes. Cleavage of the nascent transcript by cleavage factors such as GreA or GreB allows the resumption of elongation from the new 3'terminus. GreA releases sequences of 2 to 3 nucleotides.</text>
</comment>
<comment type="similarity">
    <text evidence="1">Belongs to the GreA/GreB family.</text>
</comment>
<gene>
    <name evidence="1" type="primary">greA</name>
    <name type="ordered locus">BCG_1138c</name>
</gene>
<sequence length="164" mass="17855">MTDTQVTWLTQESHDRLKAELDQLIANRPVIAAEINDRREEGDLRENGGYHAAREEQGQQEARIRQLQDLLSNAKVGEAPKQSGVALPGSVVKVYYNGDKSDSETFLIATRQEGVSDGKLEVYSPNSPLGGALIDAKVGETRSYTVPNGSTVSVTLVSAEPYHS</sequence>
<keyword id="KW-0175">Coiled coil</keyword>
<keyword id="KW-0238">DNA-binding</keyword>
<keyword id="KW-0804">Transcription</keyword>
<keyword id="KW-0805">Transcription regulation</keyword>
<protein>
    <recommendedName>
        <fullName evidence="1">Transcription elongation factor GreA</fullName>
    </recommendedName>
    <alternativeName>
        <fullName evidence="1">Transcript cleavage factor GreA</fullName>
    </alternativeName>
</protein>
<accession>A1KHL8</accession>
<name>GREA_MYCBP</name>
<dbReference type="EMBL" id="AM408590">
    <property type="protein sequence ID" value="CAL71125.1"/>
    <property type="molecule type" value="Genomic_DNA"/>
</dbReference>
<dbReference type="RefSeq" id="WP_003405742.1">
    <property type="nucleotide sequence ID" value="NC_008769.1"/>
</dbReference>
<dbReference type="SMR" id="A1KHL8"/>
<dbReference type="GeneID" id="45425053"/>
<dbReference type="KEGG" id="mbb:BCG_1138c"/>
<dbReference type="HOGENOM" id="CLU_101379_0_0_11"/>
<dbReference type="Proteomes" id="UP000001472">
    <property type="component" value="Chromosome"/>
</dbReference>
<dbReference type="GO" id="GO:0003677">
    <property type="term" value="F:DNA binding"/>
    <property type="evidence" value="ECO:0007669"/>
    <property type="project" value="UniProtKB-UniRule"/>
</dbReference>
<dbReference type="GO" id="GO:0070063">
    <property type="term" value="F:RNA polymerase binding"/>
    <property type="evidence" value="ECO:0007669"/>
    <property type="project" value="InterPro"/>
</dbReference>
<dbReference type="GO" id="GO:0006354">
    <property type="term" value="P:DNA-templated transcription elongation"/>
    <property type="evidence" value="ECO:0007669"/>
    <property type="project" value="TreeGrafter"/>
</dbReference>
<dbReference type="GO" id="GO:0032784">
    <property type="term" value="P:regulation of DNA-templated transcription elongation"/>
    <property type="evidence" value="ECO:0007669"/>
    <property type="project" value="UniProtKB-UniRule"/>
</dbReference>
<dbReference type="FunFam" id="1.10.287.180:FF:000001">
    <property type="entry name" value="Transcription elongation factor GreA"/>
    <property type="match status" value="1"/>
</dbReference>
<dbReference type="FunFam" id="3.10.50.30:FF:000003">
    <property type="entry name" value="Transcription elongation factor GreA"/>
    <property type="match status" value="1"/>
</dbReference>
<dbReference type="Gene3D" id="3.10.50.30">
    <property type="entry name" value="Transcription elongation factor, GreA/GreB, C-terminal domain"/>
    <property type="match status" value="1"/>
</dbReference>
<dbReference type="Gene3D" id="1.10.287.180">
    <property type="entry name" value="Transcription elongation factor, GreA/GreB, N-terminal domain"/>
    <property type="match status" value="1"/>
</dbReference>
<dbReference type="HAMAP" id="MF_00105">
    <property type="entry name" value="GreA_GreB"/>
    <property type="match status" value="1"/>
</dbReference>
<dbReference type="InterPro" id="IPR036953">
    <property type="entry name" value="GreA/GreB_C_sf"/>
</dbReference>
<dbReference type="InterPro" id="IPR018151">
    <property type="entry name" value="TF_GreA/GreB_CS"/>
</dbReference>
<dbReference type="InterPro" id="IPR006359">
    <property type="entry name" value="Tscrpt_elong_fac_GreA"/>
</dbReference>
<dbReference type="InterPro" id="IPR028624">
    <property type="entry name" value="Tscrpt_elong_fac_GreA/B"/>
</dbReference>
<dbReference type="InterPro" id="IPR001437">
    <property type="entry name" value="Tscrpt_elong_fac_GreA/B_C"/>
</dbReference>
<dbReference type="InterPro" id="IPR023459">
    <property type="entry name" value="Tscrpt_elong_fac_GreA/B_fam"/>
</dbReference>
<dbReference type="InterPro" id="IPR022691">
    <property type="entry name" value="Tscrpt_elong_fac_GreA/B_N"/>
</dbReference>
<dbReference type="InterPro" id="IPR036805">
    <property type="entry name" value="Tscrpt_elong_fac_GreA/B_N_sf"/>
</dbReference>
<dbReference type="NCBIfam" id="TIGR01462">
    <property type="entry name" value="greA"/>
    <property type="match status" value="1"/>
</dbReference>
<dbReference type="NCBIfam" id="NF001262">
    <property type="entry name" value="PRK00226.1-3"/>
    <property type="match status" value="1"/>
</dbReference>
<dbReference type="PANTHER" id="PTHR30437">
    <property type="entry name" value="TRANSCRIPTION ELONGATION FACTOR GREA"/>
    <property type="match status" value="1"/>
</dbReference>
<dbReference type="PANTHER" id="PTHR30437:SF4">
    <property type="entry name" value="TRANSCRIPTION ELONGATION FACTOR GREA"/>
    <property type="match status" value="1"/>
</dbReference>
<dbReference type="Pfam" id="PF01272">
    <property type="entry name" value="GreA_GreB"/>
    <property type="match status" value="1"/>
</dbReference>
<dbReference type="Pfam" id="PF03449">
    <property type="entry name" value="GreA_GreB_N"/>
    <property type="match status" value="1"/>
</dbReference>
<dbReference type="PIRSF" id="PIRSF006092">
    <property type="entry name" value="GreA_GreB"/>
    <property type="match status" value="1"/>
</dbReference>
<dbReference type="SUPFAM" id="SSF54534">
    <property type="entry name" value="FKBP-like"/>
    <property type="match status" value="1"/>
</dbReference>
<dbReference type="SUPFAM" id="SSF46557">
    <property type="entry name" value="GreA transcript cleavage protein, N-terminal domain"/>
    <property type="match status" value="1"/>
</dbReference>
<dbReference type="PROSITE" id="PS00829">
    <property type="entry name" value="GREAB_1"/>
    <property type="match status" value="1"/>
</dbReference>
<dbReference type="PROSITE" id="PS00830">
    <property type="entry name" value="GREAB_2"/>
    <property type="match status" value="1"/>
</dbReference>
<reference key="1">
    <citation type="journal article" date="2007" name="Proc. Natl. Acad. Sci. U.S.A.">
        <title>Genome plasticity of BCG and impact on vaccine efficacy.</title>
        <authorList>
            <person name="Brosch R."/>
            <person name="Gordon S.V."/>
            <person name="Garnier T."/>
            <person name="Eiglmeier K."/>
            <person name="Frigui W."/>
            <person name="Valenti P."/>
            <person name="Dos Santos S."/>
            <person name="Duthoy S."/>
            <person name="Lacroix C."/>
            <person name="Garcia-Pelayo C."/>
            <person name="Inwald J.K."/>
            <person name="Golby P."/>
            <person name="Garcia J.N."/>
            <person name="Hewinson R.G."/>
            <person name="Behr M.A."/>
            <person name="Quail M.A."/>
            <person name="Churcher C."/>
            <person name="Barrell B.G."/>
            <person name="Parkhill J."/>
            <person name="Cole S.T."/>
        </authorList>
    </citation>
    <scope>NUCLEOTIDE SEQUENCE [LARGE SCALE GENOMIC DNA]</scope>
    <source>
        <strain>BCG / Pasteur 1173P2</strain>
    </source>
</reference>
<proteinExistence type="inferred from homology"/>
<evidence type="ECO:0000255" key="1">
    <source>
        <dbReference type="HAMAP-Rule" id="MF_00105"/>
    </source>
</evidence>
<feature type="chain" id="PRO_1000034278" description="Transcription elongation factor GreA">
    <location>
        <begin position="1"/>
        <end position="164"/>
    </location>
</feature>
<feature type="coiled-coil region" evidence="1">
    <location>
        <begin position="50"/>
        <end position="76"/>
    </location>
</feature>
<organism>
    <name type="scientific">Mycobacterium bovis (strain BCG / Pasteur 1173P2)</name>
    <dbReference type="NCBI Taxonomy" id="410289"/>
    <lineage>
        <taxon>Bacteria</taxon>
        <taxon>Bacillati</taxon>
        <taxon>Actinomycetota</taxon>
        <taxon>Actinomycetes</taxon>
        <taxon>Mycobacteriales</taxon>
        <taxon>Mycobacteriaceae</taxon>
        <taxon>Mycobacterium</taxon>
        <taxon>Mycobacterium tuberculosis complex</taxon>
    </lineage>
</organism>